<protein>
    <recommendedName>
        <fullName>Probable tRNA-dihydrouridine synthase</fullName>
        <ecNumber>1.3.1.-</ecNumber>
    </recommendedName>
</protein>
<accession>Q68XZ3</accession>
<comment type="function">
    <text evidence="1">Catalyzes the synthesis of 5,6-dihydrouridine (D), a modified base found in the D-loop of most tRNAs, via the reduction of the C5-C6 double bond in target uridines.</text>
</comment>
<comment type="catalytic activity">
    <reaction evidence="1">
        <text>a 5,6-dihydrouridine in tRNA + NAD(+) = a uridine in tRNA + NADH + H(+)</text>
        <dbReference type="Rhea" id="RHEA:54452"/>
        <dbReference type="Rhea" id="RHEA-COMP:13339"/>
        <dbReference type="Rhea" id="RHEA-COMP:13887"/>
        <dbReference type="ChEBI" id="CHEBI:15378"/>
        <dbReference type="ChEBI" id="CHEBI:57540"/>
        <dbReference type="ChEBI" id="CHEBI:57945"/>
        <dbReference type="ChEBI" id="CHEBI:65315"/>
        <dbReference type="ChEBI" id="CHEBI:74443"/>
    </reaction>
</comment>
<comment type="catalytic activity">
    <reaction evidence="1">
        <text>a 5,6-dihydrouridine in tRNA + NADP(+) = a uridine in tRNA + NADPH + H(+)</text>
        <dbReference type="Rhea" id="RHEA:23624"/>
        <dbReference type="Rhea" id="RHEA-COMP:13339"/>
        <dbReference type="Rhea" id="RHEA-COMP:13887"/>
        <dbReference type="ChEBI" id="CHEBI:15378"/>
        <dbReference type="ChEBI" id="CHEBI:57783"/>
        <dbReference type="ChEBI" id="CHEBI:58349"/>
        <dbReference type="ChEBI" id="CHEBI:65315"/>
        <dbReference type="ChEBI" id="CHEBI:74443"/>
    </reaction>
</comment>
<comment type="cofactor">
    <cofactor evidence="1">
        <name>FMN</name>
        <dbReference type="ChEBI" id="CHEBI:58210"/>
    </cofactor>
</comment>
<comment type="similarity">
    <text evidence="3">Belongs to the Dus family.</text>
</comment>
<evidence type="ECO:0000250" key="1">
    <source>
        <dbReference type="UniProtKB" id="P33371"/>
    </source>
</evidence>
<evidence type="ECO:0000250" key="2">
    <source>
        <dbReference type="UniProtKB" id="Q5SMC7"/>
    </source>
</evidence>
<evidence type="ECO:0000305" key="3"/>
<name>DUS_RICTY</name>
<reference key="1">
    <citation type="journal article" date="2004" name="J. Bacteriol.">
        <title>Complete genome sequence of Rickettsia typhi and comparison with sequences of other Rickettsiae.</title>
        <authorList>
            <person name="McLeod M.P."/>
            <person name="Qin X."/>
            <person name="Karpathy S.E."/>
            <person name="Gioia J."/>
            <person name="Highlander S.K."/>
            <person name="Fox G.E."/>
            <person name="McNeill T.Z."/>
            <person name="Jiang H."/>
            <person name="Muzny D."/>
            <person name="Jacob L.S."/>
            <person name="Hawes A.C."/>
            <person name="Sodergren E."/>
            <person name="Gill R."/>
            <person name="Hume J."/>
            <person name="Morgan M."/>
            <person name="Fan G."/>
            <person name="Amin A.G."/>
            <person name="Gibbs R.A."/>
            <person name="Hong C."/>
            <person name="Yu X.-J."/>
            <person name="Walker D.H."/>
            <person name="Weinstock G.M."/>
        </authorList>
    </citation>
    <scope>NUCLEOTIDE SEQUENCE [LARGE SCALE GENOMIC DNA]</scope>
    <source>
        <strain>ATCC VR-144 / Wilmington</strain>
    </source>
</reference>
<proteinExistence type="inferred from homology"/>
<keyword id="KW-0285">Flavoprotein</keyword>
<keyword id="KW-0288">FMN</keyword>
<keyword id="KW-0521">NADP</keyword>
<keyword id="KW-0560">Oxidoreductase</keyword>
<keyword id="KW-0694">RNA-binding</keyword>
<keyword id="KW-0819">tRNA processing</keyword>
<keyword id="KW-0820">tRNA-binding</keyword>
<gene>
    <name type="primary">dus</name>
    <name type="ordered locus">RT0010</name>
</gene>
<organism>
    <name type="scientific">Rickettsia typhi (strain ATCC VR-144 / Wilmington)</name>
    <dbReference type="NCBI Taxonomy" id="257363"/>
    <lineage>
        <taxon>Bacteria</taxon>
        <taxon>Pseudomonadati</taxon>
        <taxon>Pseudomonadota</taxon>
        <taxon>Alphaproteobacteria</taxon>
        <taxon>Rickettsiales</taxon>
        <taxon>Rickettsiaceae</taxon>
        <taxon>Rickettsieae</taxon>
        <taxon>Rickettsia</taxon>
        <taxon>typhus group</taxon>
    </lineage>
</organism>
<feature type="chain" id="PRO_0000280961" description="Probable tRNA-dihydrouridine synthase">
    <location>
        <begin position="1"/>
        <end position="327"/>
    </location>
</feature>
<feature type="active site" description="Proton donor" evidence="2">
    <location>
        <position position="102"/>
    </location>
</feature>
<feature type="binding site" evidence="1">
    <location>
        <begin position="17"/>
        <end position="19"/>
    </location>
    <ligand>
        <name>FMN</name>
        <dbReference type="ChEBI" id="CHEBI:58210"/>
    </ligand>
</feature>
<feature type="binding site" evidence="1">
    <location>
        <position position="72"/>
    </location>
    <ligand>
        <name>FMN</name>
        <dbReference type="ChEBI" id="CHEBI:58210"/>
    </ligand>
</feature>
<feature type="binding site" evidence="1">
    <location>
        <position position="141"/>
    </location>
    <ligand>
        <name>FMN</name>
        <dbReference type="ChEBI" id="CHEBI:58210"/>
    </ligand>
</feature>
<feature type="binding site" evidence="1">
    <location>
        <begin position="202"/>
        <end position="204"/>
    </location>
    <ligand>
        <name>FMN</name>
        <dbReference type="ChEBI" id="CHEBI:58210"/>
    </ligand>
</feature>
<feature type="binding site" evidence="1">
    <location>
        <begin position="226"/>
        <end position="227"/>
    </location>
    <ligand>
        <name>FMN</name>
        <dbReference type="ChEBI" id="CHEBI:58210"/>
    </ligand>
</feature>
<sequence>MIKIGNIELSSNVILAPMSNITDLEFRKLVKRFGAGLVVSEMIASRAMIMKSRQSMQKCAIMHDDPTSACVQLAGCEPDVIADAAKMNEDMGAKIIDLNFGCPAKKVVGGYAGSALMRDERLATKIFEATVKAVKIPVTVKMRMGWDDNTKNAPTLAVIAASSGVQMVTVHGRTRCQFYSGNANWDFIRVVKEAVKIPVIANGDITNFAKAKEALQKSGADGIMVGRGVYGKPWLISQIAYYLKTGKEKPAPSIAEQLDIIIKHYDAIIDYYGKSVGVPIARKHIIWYSSGLPSSAEFRCAVNLMNDPIAVKEKIAEFYMSVMDANK</sequence>
<dbReference type="EC" id="1.3.1.-"/>
<dbReference type="EMBL" id="AE017197">
    <property type="protein sequence ID" value="AAU03499.1"/>
    <property type="molecule type" value="Genomic_DNA"/>
</dbReference>
<dbReference type="SMR" id="Q68XZ3"/>
<dbReference type="KEGG" id="rty:RT0010"/>
<dbReference type="eggNOG" id="COG0042">
    <property type="taxonomic scope" value="Bacteria"/>
</dbReference>
<dbReference type="HOGENOM" id="CLU_013299_0_3_5"/>
<dbReference type="OrthoDB" id="9764501at2"/>
<dbReference type="Proteomes" id="UP000000604">
    <property type="component" value="Chromosome"/>
</dbReference>
<dbReference type="GO" id="GO:0050660">
    <property type="term" value="F:flavin adenine dinucleotide binding"/>
    <property type="evidence" value="ECO:0007669"/>
    <property type="project" value="InterPro"/>
</dbReference>
<dbReference type="GO" id="GO:0000049">
    <property type="term" value="F:tRNA binding"/>
    <property type="evidence" value="ECO:0007669"/>
    <property type="project" value="UniProtKB-KW"/>
</dbReference>
<dbReference type="GO" id="GO:0017150">
    <property type="term" value="F:tRNA dihydrouridine synthase activity"/>
    <property type="evidence" value="ECO:0007669"/>
    <property type="project" value="InterPro"/>
</dbReference>
<dbReference type="CDD" id="cd02801">
    <property type="entry name" value="DUS_like_FMN"/>
    <property type="match status" value="1"/>
</dbReference>
<dbReference type="Gene3D" id="3.20.20.70">
    <property type="entry name" value="Aldolase class I"/>
    <property type="match status" value="1"/>
</dbReference>
<dbReference type="Gene3D" id="1.10.1200.80">
    <property type="entry name" value="Putative flavin oxidoreducatase, domain 2"/>
    <property type="match status" value="1"/>
</dbReference>
<dbReference type="InterPro" id="IPR013785">
    <property type="entry name" value="Aldolase_TIM"/>
</dbReference>
<dbReference type="InterPro" id="IPR035587">
    <property type="entry name" value="DUS-like_FMN-bd"/>
</dbReference>
<dbReference type="InterPro" id="IPR001269">
    <property type="entry name" value="DUS_fam"/>
</dbReference>
<dbReference type="InterPro" id="IPR004652">
    <property type="entry name" value="DusB-like"/>
</dbReference>
<dbReference type="InterPro" id="IPR024036">
    <property type="entry name" value="tRNA-dHydroUridine_Synthase_C"/>
</dbReference>
<dbReference type="InterPro" id="IPR018517">
    <property type="entry name" value="tRNA_hU_synthase_CS"/>
</dbReference>
<dbReference type="NCBIfam" id="TIGR00737">
    <property type="entry name" value="nifR3_yhdG"/>
    <property type="match status" value="1"/>
</dbReference>
<dbReference type="PANTHER" id="PTHR45846">
    <property type="entry name" value="TRNA-DIHYDROURIDINE(47) SYNTHASE [NAD(P)(+)]-LIKE"/>
    <property type="match status" value="1"/>
</dbReference>
<dbReference type="PANTHER" id="PTHR45846:SF1">
    <property type="entry name" value="TRNA-DIHYDROURIDINE(47) SYNTHASE [NAD(P)(+)]-LIKE"/>
    <property type="match status" value="1"/>
</dbReference>
<dbReference type="Pfam" id="PF01207">
    <property type="entry name" value="Dus"/>
    <property type="match status" value="1"/>
</dbReference>
<dbReference type="PIRSF" id="PIRSF006621">
    <property type="entry name" value="Dus"/>
    <property type="match status" value="1"/>
</dbReference>
<dbReference type="SUPFAM" id="SSF51395">
    <property type="entry name" value="FMN-linked oxidoreductases"/>
    <property type="match status" value="1"/>
</dbReference>
<dbReference type="PROSITE" id="PS01136">
    <property type="entry name" value="UPF0034"/>
    <property type="match status" value="1"/>
</dbReference>